<sequence>MAARPRKNNVSVPNLYPLYSRKVNKVYWRYKHPVTGKFHALGTNEAEAIAIATEANTRLAEQRTRQILAISDRIATSKGKAITTSTWLDRYQAIQDDRLKSGDIRLNTYKQKAKPVSLLRERAGMKLISAVDVRDIAQLLDEYIAAGRPRMAQVVRSVLIDVFKEAQHYGEVPPGYNPALATKQPRRKITRQRLSLEEWKKIFDIADATHRYMGNAMLLALVTGQRLGDISRMKFSDIWDDHLHVIQEKTGSKIAIPLSLRLNAINWSLRDVVARCRDYAVSAYLVHFFRSTSQAERGAQVKANTLTMNFSKARDLARIDWGEGSPATFHEQRSLSERLYKEQGLDTQKLLGHKTQQQTDRYHDDRGKGWSKVAL</sequence>
<gene>
    <name type="primary">intE</name>
    <name type="synonym">ycfI</name>
    <name type="ordered locus">b1140</name>
    <name type="ordered locus">JW1126</name>
</gene>
<accession>P75969</accession>
<protein>
    <recommendedName>
        <fullName evidence="4">Prophage integrase IntE</fullName>
    </recommendedName>
    <alternativeName>
        <fullName>Int(Lambda)</fullName>
    </alternativeName>
    <alternativeName>
        <fullName>Prophage e14 integrase</fullName>
    </alternativeName>
    <alternativeName>
        <fullName>Prophage lambda integrase</fullName>
    </alternativeName>
</protein>
<feature type="chain" id="PRO_0000197514" description="Prophage integrase IntE">
    <location>
        <begin position="1"/>
        <end position="375"/>
    </location>
</feature>
<feature type="domain" description="Core-binding (CB)" evidence="2">
    <location>
        <begin position="82"/>
        <end position="167"/>
    </location>
</feature>
<feature type="domain" description="Tyr recombinase" evidence="1">
    <location>
        <begin position="189"/>
        <end position="375"/>
    </location>
</feature>
<feature type="region of interest" description="Disordered" evidence="3">
    <location>
        <begin position="350"/>
        <end position="375"/>
    </location>
</feature>
<feature type="active site" evidence="1">
    <location>
        <position position="226"/>
    </location>
</feature>
<feature type="active site" evidence="1">
    <location>
        <position position="249"/>
    </location>
</feature>
<feature type="active site" evidence="1">
    <location>
        <position position="330"/>
    </location>
</feature>
<feature type="active site" evidence="1">
    <location>
        <position position="333"/>
    </location>
</feature>
<feature type="active site" evidence="1">
    <location>
        <position position="353"/>
    </location>
</feature>
<feature type="active site" description="O-(3'-phospho-DNA)-tyrosine intermediate" evidence="1">
    <location>
        <position position="362"/>
    </location>
</feature>
<evidence type="ECO:0000255" key="1">
    <source>
        <dbReference type="PROSITE-ProRule" id="PRU01246"/>
    </source>
</evidence>
<evidence type="ECO:0000255" key="2">
    <source>
        <dbReference type="PROSITE-ProRule" id="PRU01248"/>
    </source>
</evidence>
<evidence type="ECO:0000256" key="3">
    <source>
        <dbReference type="SAM" id="MobiDB-lite"/>
    </source>
</evidence>
<evidence type="ECO:0000305" key="4"/>
<proteinExistence type="inferred from homology"/>
<name>INTE_ECOLI</name>
<organism>
    <name type="scientific">Escherichia coli (strain K12)</name>
    <dbReference type="NCBI Taxonomy" id="83333"/>
    <lineage>
        <taxon>Bacteria</taxon>
        <taxon>Pseudomonadati</taxon>
        <taxon>Pseudomonadota</taxon>
        <taxon>Gammaproteobacteria</taxon>
        <taxon>Enterobacterales</taxon>
        <taxon>Enterobacteriaceae</taxon>
        <taxon>Escherichia</taxon>
    </lineage>
</organism>
<reference key="1">
    <citation type="journal article" date="1996" name="DNA Res.">
        <title>A 718-kb DNA sequence of the Escherichia coli K-12 genome corresponding to the 12.7-28.0 min region on the linkage map.</title>
        <authorList>
            <person name="Oshima T."/>
            <person name="Aiba H."/>
            <person name="Baba T."/>
            <person name="Fujita K."/>
            <person name="Hayashi K."/>
            <person name="Honjo A."/>
            <person name="Ikemoto K."/>
            <person name="Inada T."/>
            <person name="Itoh T."/>
            <person name="Kajihara M."/>
            <person name="Kanai K."/>
            <person name="Kashimoto K."/>
            <person name="Kimura S."/>
            <person name="Kitagawa M."/>
            <person name="Makino K."/>
            <person name="Masuda S."/>
            <person name="Miki T."/>
            <person name="Mizobuchi K."/>
            <person name="Mori H."/>
            <person name="Motomura K."/>
            <person name="Nakamura Y."/>
            <person name="Nashimoto H."/>
            <person name="Nishio Y."/>
            <person name="Saito N."/>
            <person name="Sampei G."/>
            <person name="Seki Y."/>
            <person name="Tagami H."/>
            <person name="Takemoto K."/>
            <person name="Wada C."/>
            <person name="Yamamoto Y."/>
            <person name="Yano M."/>
            <person name="Horiuchi T."/>
        </authorList>
    </citation>
    <scope>NUCLEOTIDE SEQUENCE [LARGE SCALE GENOMIC DNA]</scope>
    <source>
        <strain>K12 / W3110 / ATCC 27325 / DSM 5911</strain>
    </source>
</reference>
<reference key="2">
    <citation type="journal article" date="1997" name="Science">
        <title>The complete genome sequence of Escherichia coli K-12.</title>
        <authorList>
            <person name="Blattner F.R."/>
            <person name="Plunkett G. III"/>
            <person name="Bloch C.A."/>
            <person name="Perna N.T."/>
            <person name="Burland V."/>
            <person name="Riley M."/>
            <person name="Collado-Vides J."/>
            <person name="Glasner J.D."/>
            <person name="Rode C.K."/>
            <person name="Mayhew G.F."/>
            <person name="Gregor J."/>
            <person name="Davis N.W."/>
            <person name="Kirkpatrick H.A."/>
            <person name="Goeden M.A."/>
            <person name="Rose D.J."/>
            <person name="Mau B."/>
            <person name="Shao Y."/>
        </authorList>
    </citation>
    <scope>NUCLEOTIDE SEQUENCE [LARGE SCALE GENOMIC DNA]</scope>
    <source>
        <strain>K12 / MG1655 / ATCC 47076</strain>
    </source>
</reference>
<reference key="3">
    <citation type="journal article" date="2006" name="Mol. Syst. Biol.">
        <title>Highly accurate genome sequences of Escherichia coli K-12 strains MG1655 and W3110.</title>
        <authorList>
            <person name="Hayashi K."/>
            <person name="Morooka N."/>
            <person name="Yamamoto Y."/>
            <person name="Fujita K."/>
            <person name="Isono K."/>
            <person name="Choi S."/>
            <person name="Ohtsubo E."/>
            <person name="Baba T."/>
            <person name="Wanner B.L."/>
            <person name="Mori H."/>
            <person name="Horiuchi T."/>
        </authorList>
    </citation>
    <scope>NUCLEOTIDE SEQUENCE [LARGE SCALE GENOMIC DNA]</scope>
    <source>
        <strain>K12 / W3110 / ATCC 27325 / DSM 5911</strain>
    </source>
</reference>
<keyword id="KW-0229">DNA integration</keyword>
<keyword id="KW-0233">DNA recombination</keyword>
<keyword id="KW-0238">DNA-binding</keyword>
<keyword id="KW-1185">Reference proteome</keyword>
<keyword id="KW-1179">Viral genome integration</keyword>
<keyword id="KW-1160">Virus entry into host cell</keyword>
<dbReference type="EMBL" id="U00096">
    <property type="protein sequence ID" value="AAC74224.1"/>
    <property type="molecule type" value="Genomic_DNA"/>
</dbReference>
<dbReference type="EMBL" id="AP009048">
    <property type="protein sequence ID" value="BAA35969.1"/>
    <property type="molecule type" value="Genomic_DNA"/>
</dbReference>
<dbReference type="PIR" id="A64859">
    <property type="entry name" value="A64859"/>
</dbReference>
<dbReference type="RefSeq" id="NP_415658.1">
    <property type="nucleotide sequence ID" value="NC_000913.3"/>
</dbReference>
<dbReference type="RefSeq" id="WP_000741310.1">
    <property type="nucleotide sequence ID" value="NZ_CP064683.1"/>
</dbReference>
<dbReference type="SMR" id="P75969"/>
<dbReference type="BioGRID" id="4263213">
    <property type="interactions" value="18"/>
</dbReference>
<dbReference type="DIP" id="DIP-10037N"/>
<dbReference type="FunCoup" id="P75969">
    <property type="interactions" value="73"/>
</dbReference>
<dbReference type="IntAct" id="P75969">
    <property type="interactions" value="3"/>
</dbReference>
<dbReference type="STRING" id="511145.b1140"/>
<dbReference type="PaxDb" id="511145-b1140"/>
<dbReference type="EnsemblBacteria" id="AAC74224">
    <property type="protein sequence ID" value="AAC74224"/>
    <property type="gene ID" value="b1140"/>
</dbReference>
<dbReference type="GeneID" id="948034"/>
<dbReference type="KEGG" id="ecj:JW1126"/>
<dbReference type="KEGG" id="eco:b1140"/>
<dbReference type="PATRIC" id="fig|511145.12.peg.1186"/>
<dbReference type="EchoBASE" id="EB2273"/>
<dbReference type="eggNOG" id="COG0582">
    <property type="taxonomic scope" value="Bacteria"/>
</dbReference>
<dbReference type="HOGENOM" id="CLU_049005_0_1_6"/>
<dbReference type="InParanoid" id="P75969"/>
<dbReference type="PhylomeDB" id="P75969"/>
<dbReference type="BioCyc" id="EcoCyc:EG12370-MONOMER"/>
<dbReference type="PRO" id="PR:P75969"/>
<dbReference type="Proteomes" id="UP000000625">
    <property type="component" value="Chromosome"/>
</dbReference>
<dbReference type="GO" id="GO:0003677">
    <property type="term" value="F:DNA binding"/>
    <property type="evidence" value="ECO:0007669"/>
    <property type="project" value="UniProtKB-KW"/>
</dbReference>
<dbReference type="GO" id="GO:0046982">
    <property type="term" value="F:protein heterodimerization activity"/>
    <property type="evidence" value="ECO:0000353"/>
    <property type="project" value="UniProtKB"/>
</dbReference>
<dbReference type="GO" id="GO:0009009">
    <property type="term" value="F:site-specific recombinase activity"/>
    <property type="evidence" value="ECO:0000318"/>
    <property type="project" value="GO_Central"/>
</dbReference>
<dbReference type="GO" id="GO:0007059">
    <property type="term" value="P:chromosome segregation"/>
    <property type="evidence" value="ECO:0000318"/>
    <property type="project" value="GO_Central"/>
</dbReference>
<dbReference type="GO" id="GO:0006310">
    <property type="term" value="P:DNA recombination"/>
    <property type="evidence" value="ECO:0000318"/>
    <property type="project" value="GO_Central"/>
</dbReference>
<dbReference type="GO" id="GO:0075713">
    <property type="term" value="P:establishment of integrated proviral latency"/>
    <property type="evidence" value="ECO:0007669"/>
    <property type="project" value="UniProtKB-KW"/>
</dbReference>
<dbReference type="GO" id="GO:0046718">
    <property type="term" value="P:symbiont entry into host cell"/>
    <property type="evidence" value="ECO:0007669"/>
    <property type="project" value="UniProtKB-KW"/>
</dbReference>
<dbReference type="GO" id="GO:0044826">
    <property type="term" value="P:viral genome integration into host DNA"/>
    <property type="evidence" value="ECO:0007669"/>
    <property type="project" value="UniProtKB-KW"/>
</dbReference>
<dbReference type="CDD" id="cd00800">
    <property type="entry name" value="INT_Lambda_C"/>
    <property type="match status" value="1"/>
</dbReference>
<dbReference type="Gene3D" id="1.10.150.130">
    <property type="match status" value="1"/>
</dbReference>
<dbReference type="Gene3D" id="3.30.160.60">
    <property type="entry name" value="Classic Zinc Finger"/>
    <property type="match status" value="1"/>
</dbReference>
<dbReference type="Gene3D" id="1.10.443.10">
    <property type="entry name" value="Intergrase catalytic core"/>
    <property type="match status" value="1"/>
</dbReference>
<dbReference type="InterPro" id="IPR044068">
    <property type="entry name" value="CB"/>
</dbReference>
<dbReference type="InterPro" id="IPR016177">
    <property type="entry name" value="DNA-bd_dom_sf"/>
</dbReference>
<dbReference type="InterPro" id="IPR011010">
    <property type="entry name" value="DNA_brk_join_enz"/>
</dbReference>
<dbReference type="InterPro" id="IPR013762">
    <property type="entry name" value="Integrase-like_cat_sf"/>
</dbReference>
<dbReference type="InterPro" id="IPR002104">
    <property type="entry name" value="Integrase_catalytic"/>
</dbReference>
<dbReference type="InterPro" id="IPR015094">
    <property type="entry name" value="Integrase_lambda-typ_DNA-bd_N"/>
</dbReference>
<dbReference type="InterPro" id="IPR010998">
    <property type="entry name" value="Integrase_recombinase_N"/>
</dbReference>
<dbReference type="Pfam" id="PF09003">
    <property type="entry name" value="Arm-DNA-bind_1"/>
    <property type="match status" value="1"/>
</dbReference>
<dbReference type="Pfam" id="PF00589">
    <property type="entry name" value="Phage_integrase"/>
    <property type="match status" value="1"/>
</dbReference>
<dbReference type="SUPFAM" id="SSF56349">
    <property type="entry name" value="DNA breaking-rejoining enzymes"/>
    <property type="match status" value="1"/>
</dbReference>
<dbReference type="SUPFAM" id="SSF54171">
    <property type="entry name" value="DNA-binding domain"/>
    <property type="match status" value="1"/>
</dbReference>
<dbReference type="PROSITE" id="PS51900">
    <property type="entry name" value="CB"/>
    <property type="match status" value="1"/>
</dbReference>
<dbReference type="PROSITE" id="PS51898">
    <property type="entry name" value="TYR_RECOMBINASE"/>
    <property type="match status" value="1"/>
</dbReference>
<comment type="function">
    <text>Integrase from the cryptic lambdoid prophage e14. Integrase is necessary for integration of the phage into the host genome by site-specific recombination. In conjunction with excisionase, integrase is also necessary for excision of the prophage from the host genome.</text>
</comment>
<comment type="similarity">
    <text evidence="4">Belongs to the 'phage' integrase family.</text>
</comment>